<comment type="function">
    <text evidence="4">Part of a complex with GPSM2/LGN, PRKCI/aPKC and PARD6B/Par-6, which may ensure the correct organization and orientation of bipolar spindles for normal cell division. This complex plays roles in the initial phase of the establishment of epithelial cell polarity.</text>
</comment>
<comment type="subunit">
    <text evidence="2 4 5">Interacts with GPSM2/LGN, PRKCI/aPKC and PARD6B/Par-6. The complex is enhanced during mitosis. Interacts with DCAF1.</text>
</comment>
<comment type="subcellular location">
    <subcellularLocation>
        <location evidence="4">Cytoplasm</location>
    </subcellularLocation>
    <text>Localized in the perinuclear structure and faintly at the cell-cell contacts sites in the interphase. Localized at the cell periphery during metaphase. Cortical localization in mitotic cells. Found in the lateral region of polarized epithelial cells.</text>
</comment>
<comment type="alternative products">
    <event type="alternative splicing"/>
    <isoform>
        <id>Q6P1M3-1</id>
        <name>C</name>
        <sequence type="displayed"/>
    </isoform>
    <isoform>
        <id>Q6P1M3-2</id>
        <name>A</name>
        <sequence type="described" ref="VSP_017946"/>
    </isoform>
    <isoform>
        <id>Q6P1M3-3</id>
        <name>B</name>
        <sequence type="described" ref="VSP_047387 VSP_047388"/>
    </isoform>
</comment>
<comment type="PTM">
    <text evidence="2">Phosphorylated at Ser-653 by PRKCI. Phosphorylation is enhanced during cell polarization induced by calcium. Phosphorylation may occur during the cell-cell contact-induced cell polarization and may contribute to the segregation of LLGL2 from the PRKCI/aPKC and PARD6B/Par-6 complex.</text>
</comment>
<comment type="miscellaneous">
    <text>Overexpression of LLGL2 inhibits the tight junction formation.</text>
</comment>
<comment type="similarity">
    <text evidence="8">Belongs to the WD repeat L(2)GL family.</text>
</comment>
<protein>
    <recommendedName>
        <fullName>LLGL scribble cell polarity complex component 2</fullName>
    </recommendedName>
    <alternativeName>
        <fullName>HGL</fullName>
    </alternativeName>
    <alternativeName>
        <fullName>Lethal(2) giant larvae protein homolog 2</fullName>
    </alternativeName>
</protein>
<proteinExistence type="evidence at protein level"/>
<sequence>MRRFLRPGHDPVRERLKRDLFQFNKTVEHGFPHQPSALGYSPSLRILAIGTRSGAIKLYGAPGVEFMGLHQENNAVTQIHLLPGQCQLVTLLDDNSLHLWSLKVKGGASELQEDESFTLRGPPGAAPSATQITVVLPHSSCELLYLGTESGNVFVVQLPAFRALEDRTISSDAVLQRLPEEARHRRVFEMVEALQEHPRDPNQILIGYSRGLVVIWDLQGSRVLYHFLSSQQLENIWWQRDGRLLVSCHSDGSYCQWPVSSEAQQPEPLRSLVPYGPFPCKAITRILWLTTRQGLPFTIFQGGMPRASYGDRHCISVIHDGQQTAFDFTSRVIGFTVLTEADPAATFDDPYALVVLAEEELVVIDLQTAGWPPVQLPYLASLHCSAITCSHHVSNIPLKLWERIIAAGSRQNAHFSTMEWPIDGGTSLTPAPPQRDLLLTGHEDGTVRFWDASGVCLRLLYKLSTVRVFLTDTDPNENFSAQGEDEWPPLRKVGSFDPYSDDPRLGIQKIFLCKYSGYLAVAGTAGQVLVLELNDEAAEQAVEQVEADLLQDQEGYRWKGHERLAARSGPVRFEPGFQPFVLVQCQPPAVVTSLALHSEWRLVAFGTSHGFGLFDHQQRRQVFVKCTLHPSDQLALEGPLSRVKSLKKSLRQSFRRMRRSRVSSRKRHPAGPPGEAQEGSAKAERPGLQNMELAPVQRKIEARSAEDSFTGFVRTLYFADTYLKDSSRHCPSLWAGTNGGTIYAFSLRVPPAERRMDEPVRAEQAKEIQLMHRAPVVGILVLDGHSVPLPEPLEVAHDLSKSPDMQGSHQLLVVSEEQFKVFTLPKVSAKLKLKLTALEGSRVRRVSVAHFGSRRAEDYGEHHLAVLTNLGDIQVVSLPLLKPQVRYSCIRREDVSGIASCVFTKYGQGFYLISPSEFERFSLSTKWLVEPRCLVDSAETKNHRPGNGAGPKKAPSRARNSGTQSDGEEKQPGLVMERALLSDERVLKEIQSTLEGDRGSGNWRSHRAAVGCSLSNGGAE</sequence>
<organism>
    <name type="scientific">Homo sapiens</name>
    <name type="common">Human</name>
    <dbReference type="NCBI Taxonomy" id="9606"/>
    <lineage>
        <taxon>Eukaryota</taxon>
        <taxon>Metazoa</taxon>
        <taxon>Chordata</taxon>
        <taxon>Craniata</taxon>
        <taxon>Vertebrata</taxon>
        <taxon>Euteleostomi</taxon>
        <taxon>Mammalia</taxon>
        <taxon>Eutheria</taxon>
        <taxon>Euarchontoglires</taxon>
        <taxon>Primates</taxon>
        <taxon>Haplorrhini</taxon>
        <taxon>Catarrhini</taxon>
        <taxon>Hominidae</taxon>
        <taxon>Homo</taxon>
    </lineage>
</organism>
<name>L2GL2_HUMAN</name>
<dbReference type="EMBL" id="X87342">
    <property type="protein sequence ID" value="CAA60780.1"/>
    <property type="molecule type" value="mRNA"/>
</dbReference>
<dbReference type="EMBL" id="AC100787">
    <property type="status" value="NOT_ANNOTATED_CDS"/>
    <property type="molecule type" value="Genomic_DNA"/>
</dbReference>
<dbReference type="EMBL" id="BC006503">
    <property type="protein sequence ID" value="AAH06503.1"/>
    <property type="molecule type" value="mRNA"/>
</dbReference>
<dbReference type="EMBL" id="BC010879">
    <property type="protein sequence ID" value="AAH10879.1"/>
    <property type="molecule type" value="mRNA"/>
</dbReference>
<dbReference type="EMBL" id="BC064994">
    <property type="protein sequence ID" value="AAH64994.1"/>
    <property type="molecule type" value="mRNA"/>
</dbReference>
<dbReference type="CCDS" id="CCDS11725.1">
    <molecule id="Q6P1M3-2"/>
</dbReference>
<dbReference type="CCDS" id="CCDS32733.1">
    <molecule id="Q6P1M3-1"/>
</dbReference>
<dbReference type="CCDS" id="CCDS45776.1">
    <molecule id="Q6P1M3-3"/>
</dbReference>
<dbReference type="PIR" id="S55474">
    <property type="entry name" value="S55474"/>
</dbReference>
<dbReference type="RefSeq" id="NP_001015002.1">
    <molecule id="Q6P1M3-3"/>
    <property type="nucleotide sequence ID" value="NM_001015002.2"/>
</dbReference>
<dbReference type="RefSeq" id="NP_001026973.1">
    <molecule id="Q6P1M3-1"/>
    <property type="nucleotide sequence ID" value="NM_001031803.2"/>
</dbReference>
<dbReference type="RefSeq" id="NP_004515.2">
    <molecule id="Q6P1M3-2"/>
    <property type="nucleotide sequence ID" value="NM_004524.3"/>
</dbReference>
<dbReference type="RefSeq" id="XP_016880115.1">
    <molecule id="Q6P1M3-1"/>
    <property type="nucleotide sequence ID" value="XM_017024626.2"/>
</dbReference>
<dbReference type="RefSeq" id="XP_016880119.1">
    <property type="nucleotide sequence ID" value="XM_017024630.1"/>
</dbReference>
<dbReference type="RefSeq" id="XP_024306515.2">
    <molecule id="Q6P1M3-2"/>
    <property type="nucleotide sequence ID" value="XM_024450747.2"/>
</dbReference>
<dbReference type="RefSeq" id="XP_047291937.1">
    <molecule id="Q6P1M3-1"/>
    <property type="nucleotide sequence ID" value="XM_047435981.1"/>
</dbReference>
<dbReference type="RefSeq" id="XP_047291938.1">
    <molecule id="Q6P1M3-1"/>
    <property type="nucleotide sequence ID" value="XM_047435982.1"/>
</dbReference>
<dbReference type="RefSeq" id="XP_047291939.1">
    <molecule id="Q6P1M3-1"/>
    <property type="nucleotide sequence ID" value="XM_047435983.1"/>
</dbReference>
<dbReference type="RefSeq" id="XP_047291946.1">
    <molecule id="Q6P1M3-2"/>
    <property type="nucleotide sequence ID" value="XM_047435990.1"/>
</dbReference>
<dbReference type="RefSeq" id="XP_047291947.1">
    <molecule id="Q6P1M3-2"/>
    <property type="nucleotide sequence ID" value="XM_047435991.1"/>
</dbReference>
<dbReference type="RefSeq" id="XP_047291954.1">
    <molecule id="Q6P1M3-3"/>
    <property type="nucleotide sequence ID" value="XM_047435998.1"/>
</dbReference>
<dbReference type="RefSeq" id="XP_054172062.1">
    <molecule id="Q6P1M3-3"/>
    <property type="nucleotide sequence ID" value="XM_054316087.1"/>
</dbReference>
<dbReference type="PDB" id="3WP0">
    <property type="method" value="X-ray"/>
    <property type="resolution" value="2.04 A"/>
    <property type="chains" value="B=640-654"/>
</dbReference>
<dbReference type="PDB" id="3WP1">
    <property type="method" value="X-ray"/>
    <property type="resolution" value="2.80 A"/>
    <property type="chains" value="A=646-657"/>
</dbReference>
<dbReference type="PDB" id="6N8P">
    <property type="method" value="X-ray"/>
    <property type="resolution" value="3.19 A"/>
    <property type="chains" value="A=12-978"/>
</dbReference>
<dbReference type="PDB" id="6N8Q">
    <property type="method" value="X-ray"/>
    <property type="resolution" value="2.20 A"/>
    <property type="chains" value="A=12-978"/>
</dbReference>
<dbReference type="PDB" id="6N8R">
    <property type="method" value="X-ray"/>
    <property type="resolution" value="1.91 A"/>
    <property type="chains" value="A=12-978"/>
</dbReference>
<dbReference type="PDB" id="6N8S">
    <property type="method" value="X-ray"/>
    <property type="resolution" value="3.90 A"/>
    <property type="chains" value="A/D=12-978"/>
</dbReference>
<dbReference type="PDB" id="8R3X">
    <property type="method" value="X-ray"/>
    <property type="resolution" value="2.59 A"/>
    <property type="chains" value="C/D=641-660"/>
</dbReference>
<dbReference type="PDBsum" id="3WP0"/>
<dbReference type="PDBsum" id="3WP1"/>
<dbReference type="PDBsum" id="6N8P"/>
<dbReference type="PDBsum" id="6N8Q"/>
<dbReference type="PDBsum" id="6N8R"/>
<dbReference type="PDBsum" id="6N8S"/>
<dbReference type="PDBsum" id="8R3X"/>
<dbReference type="SMR" id="Q6P1M3"/>
<dbReference type="BioGRID" id="110181">
    <property type="interactions" value="140"/>
</dbReference>
<dbReference type="ComplexPortal" id="CPX-6168">
    <property type="entry name" value="Scribble cell polarity complex, DLG1-LLGL2-SCRIB variant"/>
</dbReference>
<dbReference type="ComplexPortal" id="CPX-6184">
    <property type="entry name" value="Scribble cell polarity complex, DLG2-LLGL2-SCRIB variant"/>
</dbReference>
<dbReference type="ComplexPortal" id="CPX-6185">
    <property type="entry name" value="Scribble cell polarity complex, DLG3-LLGL2-SCRIB variant"/>
</dbReference>
<dbReference type="ComplexPortal" id="CPX-6186">
    <property type="entry name" value="Scribble cell polarity complex, DLG4-LLGL2-SCRIB variant"/>
</dbReference>
<dbReference type="ComplexPortal" id="CPX-6187">
    <property type="entry name" value="Scribble cell polarity complex, DLG5-LLGL2-SCRIB variant"/>
</dbReference>
<dbReference type="CORUM" id="Q6P1M3"/>
<dbReference type="FunCoup" id="Q6P1M3">
    <property type="interactions" value="1496"/>
</dbReference>
<dbReference type="IntAct" id="Q6P1M3">
    <property type="interactions" value="108"/>
</dbReference>
<dbReference type="STRING" id="9606.ENSP00000376333"/>
<dbReference type="GlyGen" id="Q6P1M3">
    <property type="glycosylation" value="2 sites, 1 O-linked glycan (2 sites)"/>
</dbReference>
<dbReference type="iPTMnet" id="Q6P1M3"/>
<dbReference type="PhosphoSitePlus" id="Q6P1M3"/>
<dbReference type="BioMuta" id="LLGL2"/>
<dbReference type="DMDM" id="93204600"/>
<dbReference type="jPOST" id="Q6P1M3"/>
<dbReference type="MassIVE" id="Q6P1M3"/>
<dbReference type="PaxDb" id="9606-ENSP00000376333"/>
<dbReference type="PeptideAtlas" id="Q6P1M3"/>
<dbReference type="ProteomicsDB" id="66850">
    <molecule id="Q6P1M3-1"/>
</dbReference>
<dbReference type="ProteomicsDB" id="66851">
    <molecule id="Q6P1M3-2"/>
</dbReference>
<dbReference type="ProteomicsDB" id="66852">
    <molecule id="Q6P1M3-3"/>
</dbReference>
<dbReference type="Pumba" id="Q6P1M3"/>
<dbReference type="Antibodypedia" id="19581">
    <property type="antibodies" value="206 antibodies from 27 providers"/>
</dbReference>
<dbReference type="DNASU" id="3993"/>
<dbReference type="Ensembl" id="ENST00000167462.9">
    <molecule id="Q6P1M3-2"/>
    <property type="protein sequence ID" value="ENSP00000167462.5"/>
    <property type="gene ID" value="ENSG00000073350.14"/>
</dbReference>
<dbReference type="Ensembl" id="ENST00000375227.8">
    <molecule id="Q6P1M3-3"/>
    <property type="protein sequence ID" value="ENSP00000364375.4"/>
    <property type="gene ID" value="ENSG00000073350.14"/>
</dbReference>
<dbReference type="Ensembl" id="ENST00000392550.8">
    <molecule id="Q6P1M3-1"/>
    <property type="protein sequence ID" value="ENSP00000376333.4"/>
    <property type="gene ID" value="ENSG00000073350.14"/>
</dbReference>
<dbReference type="Ensembl" id="ENST00000578363.5">
    <molecule id="Q6P1M3-3"/>
    <property type="protein sequence ID" value="ENSP00000464603.1"/>
    <property type="gene ID" value="ENSG00000073350.14"/>
</dbReference>
<dbReference type="GeneID" id="3993"/>
<dbReference type="KEGG" id="hsa:3993"/>
<dbReference type="MANE-Select" id="ENST00000392550.8">
    <property type="protein sequence ID" value="ENSP00000376333.4"/>
    <property type="RefSeq nucleotide sequence ID" value="NM_001031803.2"/>
    <property type="RefSeq protein sequence ID" value="NP_001026973.1"/>
</dbReference>
<dbReference type="UCSC" id="uc002jog.2">
    <molecule id="Q6P1M3-1"/>
    <property type="organism name" value="human"/>
</dbReference>
<dbReference type="AGR" id="HGNC:6629"/>
<dbReference type="CTD" id="3993"/>
<dbReference type="DisGeNET" id="3993"/>
<dbReference type="GeneCards" id="LLGL2"/>
<dbReference type="HGNC" id="HGNC:6629">
    <property type="gene designation" value="LLGL2"/>
</dbReference>
<dbReference type="HPA" id="ENSG00000073350">
    <property type="expression patterns" value="Low tissue specificity"/>
</dbReference>
<dbReference type="MalaCards" id="LLGL2"/>
<dbReference type="MIM" id="618483">
    <property type="type" value="gene"/>
</dbReference>
<dbReference type="neXtProt" id="NX_Q6P1M3"/>
<dbReference type="OpenTargets" id="ENSG00000073350"/>
<dbReference type="PharmGKB" id="PA30397"/>
<dbReference type="VEuPathDB" id="HostDB:ENSG00000073350"/>
<dbReference type="eggNOG" id="KOG1983">
    <property type="taxonomic scope" value="Eukaryota"/>
</dbReference>
<dbReference type="GeneTree" id="ENSGT00950000182906"/>
<dbReference type="HOGENOM" id="CLU_046862_0_0_1"/>
<dbReference type="InParanoid" id="Q6P1M3"/>
<dbReference type="OMA" id="TKNHSRP"/>
<dbReference type="OrthoDB" id="19944at2759"/>
<dbReference type="PAN-GO" id="Q6P1M3">
    <property type="GO annotations" value="10 GO annotations based on evolutionary models"/>
</dbReference>
<dbReference type="PhylomeDB" id="Q6P1M3"/>
<dbReference type="TreeFam" id="TF314585"/>
<dbReference type="PathwayCommons" id="Q6P1M3"/>
<dbReference type="SignaLink" id="Q6P1M3"/>
<dbReference type="SIGNOR" id="Q6P1M3"/>
<dbReference type="BioGRID-ORCS" id="3993">
    <property type="hits" value="14 hits in 1155 CRISPR screens"/>
</dbReference>
<dbReference type="ChiTaRS" id="LLGL2">
    <property type="organism name" value="human"/>
</dbReference>
<dbReference type="EvolutionaryTrace" id="Q6P1M3"/>
<dbReference type="GenomeRNAi" id="3993"/>
<dbReference type="Pharos" id="Q6P1M3">
    <property type="development level" value="Tbio"/>
</dbReference>
<dbReference type="PRO" id="PR:Q6P1M3"/>
<dbReference type="Proteomes" id="UP000005640">
    <property type="component" value="Chromosome 17"/>
</dbReference>
<dbReference type="RNAct" id="Q6P1M3">
    <property type="molecule type" value="protein"/>
</dbReference>
<dbReference type="Bgee" id="ENSG00000073350">
    <property type="expression patterns" value="Expressed in mucosa of transverse colon and 157 other cell types or tissues"/>
</dbReference>
<dbReference type="ExpressionAtlas" id="Q6P1M3">
    <property type="expression patterns" value="baseline and differential"/>
</dbReference>
<dbReference type="GO" id="GO:0005912">
    <property type="term" value="C:adherens junction"/>
    <property type="evidence" value="ECO:0000303"/>
    <property type="project" value="ComplexPortal"/>
</dbReference>
<dbReference type="GO" id="GO:0030864">
    <property type="term" value="C:cortical actin cytoskeleton"/>
    <property type="evidence" value="ECO:0000318"/>
    <property type="project" value="GO_Central"/>
</dbReference>
<dbReference type="GO" id="GO:0005737">
    <property type="term" value="C:cytoplasm"/>
    <property type="evidence" value="ECO:0000314"/>
    <property type="project" value="UniProtKB"/>
</dbReference>
<dbReference type="GO" id="GO:0005829">
    <property type="term" value="C:cytosol"/>
    <property type="evidence" value="ECO:0000314"/>
    <property type="project" value="HPA"/>
</dbReference>
<dbReference type="GO" id="GO:0043231">
    <property type="term" value="C:intracellular membrane-bounded organelle"/>
    <property type="evidence" value="ECO:0000314"/>
    <property type="project" value="HPA"/>
</dbReference>
<dbReference type="GO" id="GO:0005886">
    <property type="term" value="C:plasma membrane"/>
    <property type="evidence" value="ECO:0000318"/>
    <property type="project" value="GO_Central"/>
</dbReference>
<dbReference type="GO" id="GO:0005096">
    <property type="term" value="F:GTPase activator activity"/>
    <property type="evidence" value="ECO:0000318"/>
    <property type="project" value="GO_Central"/>
</dbReference>
<dbReference type="GO" id="GO:0045159">
    <property type="term" value="F:myosin II binding"/>
    <property type="evidence" value="ECO:0000318"/>
    <property type="project" value="GO_Central"/>
</dbReference>
<dbReference type="GO" id="GO:0030165">
    <property type="term" value="F:PDZ domain binding"/>
    <property type="evidence" value="ECO:0000353"/>
    <property type="project" value="UniProtKB"/>
</dbReference>
<dbReference type="GO" id="GO:0060670">
    <property type="term" value="P:branching involved in labyrinthine layer morphogenesis"/>
    <property type="evidence" value="ECO:0007669"/>
    <property type="project" value="Ensembl"/>
</dbReference>
<dbReference type="GO" id="GO:0051301">
    <property type="term" value="P:cell division"/>
    <property type="evidence" value="ECO:0007669"/>
    <property type="project" value="UniProtKB-KW"/>
</dbReference>
<dbReference type="GO" id="GO:0030866">
    <property type="term" value="P:cortical actin cytoskeleton organization"/>
    <property type="evidence" value="ECO:0000318"/>
    <property type="project" value="GO_Central"/>
</dbReference>
<dbReference type="GO" id="GO:0051294">
    <property type="term" value="P:establishment of spindle orientation"/>
    <property type="evidence" value="ECO:0000318"/>
    <property type="project" value="GO_Central"/>
</dbReference>
<dbReference type="GO" id="GO:0045197">
    <property type="term" value="P:establishment or maintenance of epithelial cell apical/basal polarity"/>
    <property type="evidence" value="ECO:0000303"/>
    <property type="project" value="ComplexPortal"/>
</dbReference>
<dbReference type="GO" id="GO:0016332">
    <property type="term" value="P:establishment or maintenance of polarity of embryonic epithelium"/>
    <property type="evidence" value="ECO:0007669"/>
    <property type="project" value="Ensembl"/>
</dbReference>
<dbReference type="GO" id="GO:0006887">
    <property type="term" value="P:exocytosis"/>
    <property type="evidence" value="ECO:0007669"/>
    <property type="project" value="UniProtKB-KW"/>
</dbReference>
<dbReference type="GO" id="GO:0006893">
    <property type="term" value="P:Golgi to plasma membrane transport"/>
    <property type="evidence" value="ECO:0000318"/>
    <property type="project" value="GO_Central"/>
</dbReference>
<dbReference type="GO" id="GO:0015820">
    <property type="term" value="P:L-leucine transport"/>
    <property type="evidence" value="ECO:0000315"/>
    <property type="project" value="UniProtKB"/>
</dbReference>
<dbReference type="GO" id="GO:0060716">
    <property type="term" value="P:labyrinthine layer blood vessel development"/>
    <property type="evidence" value="ECO:0007669"/>
    <property type="project" value="Ensembl"/>
</dbReference>
<dbReference type="GO" id="GO:0035264">
    <property type="term" value="P:multicellular organism growth"/>
    <property type="evidence" value="ECO:0007669"/>
    <property type="project" value="Ensembl"/>
</dbReference>
<dbReference type="GO" id="GO:0009791">
    <property type="term" value="P:post-embryonic development"/>
    <property type="evidence" value="ECO:0007669"/>
    <property type="project" value="Ensembl"/>
</dbReference>
<dbReference type="GO" id="GO:0032878">
    <property type="term" value="P:regulation of establishment or maintenance of cell polarity"/>
    <property type="evidence" value="ECO:0000314"/>
    <property type="project" value="UniProtKB"/>
</dbReference>
<dbReference type="GO" id="GO:0008593">
    <property type="term" value="P:regulation of Notch signaling pathway"/>
    <property type="evidence" value="ECO:0000318"/>
    <property type="project" value="GO_Central"/>
</dbReference>
<dbReference type="DisProt" id="DP02730"/>
<dbReference type="FunFam" id="2.130.10.10:FF:000170">
    <property type="entry name" value="lethal(2) giant larvae protein homolog 2 isoform X2"/>
    <property type="match status" value="1"/>
</dbReference>
<dbReference type="FunFam" id="2.130.10.10:FF:000496">
    <property type="entry name" value="LLGL2, scribble cell polarity complex component"/>
    <property type="match status" value="1"/>
</dbReference>
<dbReference type="Gene3D" id="2.130.10.10">
    <property type="entry name" value="YVTN repeat-like/Quinoprotein amine dehydrogenase"/>
    <property type="match status" value="2"/>
</dbReference>
<dbReference type="InterPro" id="IPR000664">
    <property type="entry name" value="Lethal2_giant"/>
</dbReference>
<dbReference type="InterPro" id="IPR013577">
    <property type="entry name" value="LLGL2"/>
</dbReference>
<dbReference type="InterPro" id="IPR015943">
    <property type="entry name" value="WD40/YVTN_repeat-like_dom_sf"/>
</dbReference>
<dbReference type="InterPro" id="IPR036322">
    <property type="entry name" value="WD40_repeat_dom_sf"/>
</dbReference>
<dbReference type="InterPro" id="IPR001680">
    <property type="entry name" value="WD40_rpt"/>
</dbReference>
<dbReference type="PANTHER" id="PTHR10241">
    <property type="entry name" value="LETHAL 2 GIANT LARVAE PROTEIN"/>
    <property type="match status" value="1"/>
</dbReference>
<dbReference type="PANTHER" id="PTHR10241:SF20">
    <property type="entry name" value="LLGL SCRIBBLE CELL POLARITY COMPLEX COMPONENT 2"/>
    <property type="match status" value="1"/>
</dbReference>
<dbReference type="Pfam" id="PF08366">
    <property type="entry name" value="LLGL"/>
    <property type="match status" value="1"/>
</dbReference>
<dbReference type="Pfam" id="PF00400">
    <property type="entry name" value="WD40"/>
    <property type="match status" value="1"/>
</dbReference>
<dbReference type="PRINTS" id="PR00962">
    <property type="entry name" value="LETHAL2GIANT"/>
</dbReference>
<dbReference type="SMART" id="SM00320">
    <property type="entry name" value="WD40"/>
    <property type="match status" value="5"/>
</dbReference>
<dbReference type="SUPFAM" id="SSF50978">
    <property type="entry name" value="WD40 repeat-like"/>
    <property type="match status" value="2"/>
</dbReference>
<dbReference type="PROSITE" id="PS00678">
    <property type="entry name" value="WD_REPEATS_1"/>
    <property type="match status" value="1"/>
</dbReference>
<dbReference type="PROSITE" id="PS50082">
    <property type="entry name" value="WD_REPEATS_2"/>
    <property type="match status" value="1"/>
</dbReference>
<accession>Q6P1M3</accession>
<accession>Q14521</accession>
<accession>Q9BR62</accession>
<keyword id="KW-0002">3D-structure</keyword>
<keyword id="KW-0025">Alternative splicing</keyword>
<keyword id="KW-0131">Cell cycle</keyword>
<keyword id="KW-0132">Cell division</keyword>
<keyword id="KW-0963">Cytoplasm</keyword>
<keyword id="KW-0268">Exocytosis</keyword>
<keyword id="KW-0597">Phosphoprotein</keyword>
<keyword id="KW-1267">Proteomics identification</keyword>
<keyword id="KW-1185">Reference proteome</keyword>
<keyword id="KW-0677">Repeat</keyword>
<keyword id="KW-0853">WD repeat</keyword>
<feature type="chain" id="PRO_0000232728" description="LLGL scribble cell polarity complex component 2">
    <location>
        <begin position="1"/>
        <end position="1020"/>
    </location>
</feature>
<feature type="repeat" description="WD 1">
    <location>
        <begin position="36"/>
        <end position="69"/>
    </location>
</feature>
<feature type="repeat" description="WD 2">
    <location>
        <begin position="76"/>
        <end position="117"/>
    </location>
</feature>
<feature type="repeat" description="WD 3">
    <location>
        <begin position="132"/>
        <end position="169"/>
    </location>
</feature>
<feature type="repeat" description="WD 4">
    <location>
        <begin position="193"/>
        <end position="227"/>
    </location>
</feature>
<feature type="repeat" description="WD 5">
    <location>
        <begin position="233"/>
        <end position="268"/>
    </location>
</feature>
<feature type="repeat" description="WD 6">
    <location>
        <begin position="282"/>
        <end position="324"/>
    </location>
</feature>
<feature type="repeat" description="WD 7">
    <location>
        <begin position="332"/>
        <end position="366"/>
    </location>
</feature>
<feature type="repeat" description="WD 8">
    <location>
        <begin position="388"/>
        <end position="464"/>
    </location>
</feature>
<feature type="repeat" description="WD 9">
    <location>
        <begin position="508"/>
        <end position="583"/>
    </location>
</feature>
<feature type="repeat" description="WD 10">
    <location>
        <begin position="592"/>
        <end position="653"/>
    </location>
</feature>
<feature type="repeat" description="WD 11">
    <location>
        <begin position="713"/>
        <end position="769"/>
    </location>
</feature>
<feature type="repeat" description="WD 12">
    <location>
        <begin position="778"/>
        <end position="830"/>
    </location>
</feature>
<feature type="repeat" description="WD 13">
    <location>
        <begin position="835"/>
        <end position="888"/>
    </location>
</feature>
<feature type="repeat" description="WD 14">
    <location>
        <begin position="902"/>
        <end position="925"/>
    </location>
</feature>
<feature type="region of interest" description="Disordered" evidence="1">
    <location>
        <begin position="653"/>
        <end position="689"/>
    </location>
</feature>
<feature type="region of interest" description="Disordered" evidence="1">
    <location>
        <begin position="938"/>
        <end position="975"/>
    </location>
</feature>
<feature type="region of interest" description="Disordered" evidence="1">
    <location>
        <begin position="992"/>
        <end position="1020"/>
    </location>
</feature>
<feature type="compositionally biased region" description="Basic residues" evidence="1">
    <location>
        <begin position="653"/>
        <end position="669"/>
    </location>
</feature>
<feature type="modified residue" description="Phosphoserine" evidence="2">
    <location>
        <position position="653"/>
    </location>
</feature>
<feature type="modified residue" description="Phosphoserine" evidence="10">
    <location>
        <position position="965"/>
    </location>
</feature>
<feature type="modified residue" description="Phosphoserine" evidence="9">
    <location>
        <position position="1015"/>
    </location>
</feature>
<feature type="splice variant" id="VSP_047387" description="In isoform B." evidence="7">
    <original>TFDDPYALVVL</original>
    <variation>SRRASGVGAQG</variation>
    <location>
        <begin position="346"/>
        <end position="356"/>
    </location>
</feature>
<feature type="splice variant" id="VSP_047388" description="In isoform B." evidence="7">
    <location>
        <begin position="357"/>
        <end position="1020"/>
    </location>
</feature>
<feature type="splice variant" id="VSP_017946" description="In isoform A." evidence="7">
    <original>VLKEIQSTLEGDRGSGNWRSHRAAVGCSLSNGGAE</original>
    <variation>AATGVHIEPPWGAASAMAEQSEWLSVQAAR</variation>
    <location>
        <begin position="986"/>
        <end position="1020"/>
    </location>
</feature>
<feature type="sequence variant" id="VAR_050069" description="In dbSNP:rs1671036." evidence="6">
    <original>R</original>
    <variation>H</variation>
    <location>
        <position position="45"/>
    </location>
</feature>
<feature type="sequence variant" id="VAR_050070" description="In dbSNP:rs1671021." evidence="3">
    <original>F</original>
    <variation>L</variation>
    <location>
        <position position="479"/>
    </location>
</feature>
<feature type="sequence variant" id="VAR_050071" description="In dbSNP:rs1029359081.">
    <original>P</original>
    <variation>L</variation>
    <location>
        <position position="488"/>
    </location>
</feature>
<feature type="sequence variant" id="VAR_050072" description="In dbSNP:rs1671021.">
    <original>L</original>
    <variation>P</variation>
    <location>
        <position position="490"/>
    </location>
</feature>
<feature type="sequence variant" id="VAR_034058" description="In dbSNP:rs35474687.">
    <original>R</original>
    <variation>H</variation>
    <location>
        <position position="748"/>
    </location>
</feature>
<feature type="sequence variant" id="VAR_050073" description="In dbSNP:rs1661715." evidence="3">
    <original>P</original>
    <variation>S</variation>
    <location>
        <position position="759"/>
    </location>
</feature>
<feature type="sequence variant" id="VAR_050075" description="In dbSNP:rs1034603645.">
    <original>P</original>
    <variation>L</variation>
    <location>
        <position position="790"/>
    </location>
</feature>
<feature type="sequence variant" id="VAR_034059" description="In dbSNP:rs35886912.">
    <original>G</original>
    <variation>S</variation>
    <location>
        <position position="1001"/>
    </location>
</feature>
<feature type="mutagenesis site" description="No effect on phosphorylation." evidence="2">
    <original>S</original>
    <variation>A</variation>
    <location>
        <position position="641"/>
    </location>
</feature>
<feature type="mutagenesis site" description="Decrease of phosphorylation." evidence="2">
    <original>S</original>
    <variation>A</variation>
    <location>
        <position position="645"/>
    </location>
</feature>
<feature type="mutagenesis site" description="Decrease of phosphorylation." evidence="2">
    <original>S</original>
    <variation>A</variation>
    <location>
        <position position="649"/>
    </location>
</feature>
<feature type="mutagenesis site" description="Loss of phosphorylation." evidence="2">
    <original>S</original>
    <variation>A</variation>
    <location>
        <position position="653"/>
    </location>
</feature>
<feature type="mutagenesis site" description="Decrease of phosphorylation." evidence="2">
    <original>S</original>
    <variation>A</variation>
    <location>
        <position position="660"/>
    </location>
</feature>
<feature type="mutagenesis site" description="No effect on phosphorylation." evidence="2">
    <original>S</original>
    <variation>A</variation>
    <location>
        <position position="663"/>
    </location>
</feature>
<feature type="helix" evidence="14">
    <location>
        <begin position="14"/>
        <end position="20"/>
    </location>
</feature>
<feature type="strand" evidence="14">
    <location>
        <begin position="21"/>
        <end position="30"/>
    </location>
</feature>
<feature type="strand" evidence="14">
    <location>
        <begin position="33"/>
        <end position="41"/>
    </location>
</feature>
<feature type="turn" evidence="14">
    <location>
        <begin position="42"/>
        <end position="45"/>
    </location>
</feature>
<feature type="strand" evidence="14">
    <location>
        <begin position="46"/>
        <end position="51"/>
    </location>
</feature>
<feature type="strand" evidence="14">
    <location>
        <begin position="54"/>
        <end position="59"/>
    </location>
</feature>
<feature type="strand" evidence="14">
    <location>
        <begin position="65"/>
        <end position="69"/>
    </location>
</feature>
<feature type="strand" evidence="14">
    <location>
        <begin position="76"/>
        <end position="81"/>
    </location>
</feature>
<feature type="strand" evidence="14">
    <location>
        <begin position="83"/>
        <end position="92"/>
    </location>
</feature>
<feature type="strand" evidence="14">
    <location>
        <begin position="95"/>
        <end position="105"/>
    </location>
</feature>
<feature type="strand" evidence="14">
    <location>
        <begin position="108"/>
        <end position="118"/>
    </location>
</feature>
<feature type="helix" evidence="14">
    <location>
        <begin position="127"/>
        <end position="130"/>
    </location>
</feature>
<feature type="strand" evidence="14">
    <location>
        <begin position="132"/>
        <end position="137"/>
    </location>
</feature>
<feature type="strand" evidence="14">
    <location>
        <begin position="141"/>
        <end position="148"/>
    </location>
</feature>
<feature type="strand" evidence="14">
    <location>
        <begin position="153"/>
        <end position="157"/>
    </location>
</feature>
<feature type="turn" evidence="14">
    <location>
        <begin position="158"/>
        <end position="161"/>
    </location>
</feature>
<feature type="helix" evidence="14">
    <location>
        <begin position="165"/>
        <end position="167"/>
    </location>
</feature>
<feature type="helix" evidence="14">
    <location>
        <begin position="171"/>
        <end position="176"/>
    </location>
</feature>
<feature type="helix" evidence="14">
    <location>
        <begin position="180"/>
        <end position="182"/>
    </location>
</feature>
<feature type="strand" evidence="14">
    <location>
        <begin position="191"/>
        <end position="197"/>
    </location>
</feature>
<feature type="strand" evidence="14">
    <location>
        <begin position="200"/>
        <end position="208"/>
    </location>
</feature>
<feature type="strand" evidence="14">
    <location>
        <begin position="211"/>
        <end position="217"/>
    </location>
</feature>
<feature type="turn" evidence="14">
    <location>
        <begin position="218"/>
        <end position="221"/>
    </location>
</feature>
<feature type="strand" evidence="14">
    <location>
        <begin position="222"/>
        <end position="228"/>
    </location>
</feature>
<feature type="strand" evidence="14">
    <location>
        <begin position="233"/>
        <end position="238"/>
    </location>
</feature>
<feature type="strand" evidence="14">
    <location>
        <begin position="242"/>
        <end position="249"/>
    </location>
</feature>
<feature type="strand" evidence="14">
    <location>
        <begin position="254"/>
        <end position="258"/>
    </location>
</feature>
<feature type="strand" evidence="13">
    <location>
        <begin position="263"/>
        <end position="265"/>
    </location>
</feature>
<feature type="strand" evidence="14">
    <location>
        <begin position="269"/>
        <end position="272"/>
    </location>
</feature>
<feature type="strand" evidence="14">
    <location>
        <begin position="283"/>
        <end position="289"/>
    </location>
</feature>
<feature type="strand" evidence="14">
    <location>
        <begin position="297"/>
        <end position="302"/>
    </location>
</feature>
<feature type="helix" evidence="14">
    <location>
        <begin position="306"/>
        <end position="309"/>
    </location>
</feature>
<feature type="strand" evidence="14">
    <location>
        <begin position="313"/>
        <end position="319"/>
    </location>
</feature>
<feature type="strand" evidence="14">
    <location>
        <begin position="322"/>
        <end position="330"/>
    </location>
</feature>
<feature type="strand" evidence="14">
    <location>
        <begin position="332"/>
        <end position="340"/>
    </location>
</feature>
<feature type="strand" evidence="14">
    <location>
        <begin position="350"/>
        <end position="359"/>
    </location>
</feature>
<feature type="strand" evidence="14">
    <location>
        <begin position="361"/>
        <end position="368"/>
    </location>
</feature>
<feature type="strand" evidence="14">
    <location>
        <begin position="387"/>
        <end position="393"/>
    </location>
</feature>
<feature type="helix" evidence="14">
    <location>
        <begin position="398"/>
        <end position="411"/>
    </location>
</feature>
<feature type="turn" evidence="14">
    <location>
        <begin position="412"/>
        <end position="414"/>
    </location>
</feature>
<feature type="strand" evidence="14">
    <location>
        <begin position="425"/>
        <end position="427"/>
    </location>
</feature>
<feature type="strand" evidence="14">
    <location>
        <begin position="437"/>
        <end position="442"/>
    </location>
</feature>
<feature type="strand" evidence="14">
    <location>
        <begin position="445"/>
        <end position="451"/>
    </location>
</feature>
<feature type="strand" evidence="14">
    <location>
        <begin position="453"/>
        <end position="456"/>
    </location>
</feature>
<feature type="strand" evidence="14">
    <location>
        <begin position="458"/>
        <end position="464"/>
    </location>
</feature>
<feature type="helix" evidence="14">
    <location>
        <begin position="466"/>
        <end position="468"/>
    </location>
</feature>
<feature type="strand" evidence="14">
    <location>
        <begin position="490"/>
        <end position="492"/>
    </location>
</feature>
<feature type="helix" evidence="14">
    <location>
        <begin position="503"/>
        <end position="505"/>
    </location>
</feature>
<feature type="strand" evidence="14">
    <location>
        <begin position="507"/>
        <end position="512"/>
    </location>
</feature>
<feature type="turn" evidence="14">
    <location>
        <begin position="514"/>
        <end position="516"/>
    </location>
</feature>
<feature type="strand" evidence="14">
    <location>
        <begin position="518"/>
        <end position="523"/>
    </location>
</feature>
<feature type="strand" evidence="14">
    <location>
        <begin position="526"/>
        <end position="536"/>
    </location>
</feature>
<feature type="strand" evidence="14">
    <location>
        <begin position="538"/>
        <end position="541"/>
    </location>
</feature>
<feature type="strand" evidence="14">
    <location>
        <begin position="543"/>
        <end position="548"/>
    </location>
</feature>
<feature type="turn" evidence="14">
    <location>
        <begin position="549"/>
        <end position="552"/>
    </location>
</feature>
<feature type="strand" evidence="14">
    <location>
        <begin position="569"/>
        <end position="573"/>
    </location>
</feature>
<feature type="strand" evidence="14">
    <location>
        <begin position="575"/>
        <end position="587"/>
    </location>
</feature>
<feature type="strand" evidence="14">
    <location>
        <begin position="593"/>
        <end position="597"/>
    </location>
</feature>
<feature type="turn" evidence="14">
    <location>
        <begin position="598"/>
        <end position="601"/>
    </location>
</feature>
<feature type="strand" evidence="14">
    <location>
        <begin position="602"/>
        <end position="606"/>
    </location>
</feature>
<feature type="strand" evidence="14">
    <location>
        <begin position="608"/>
        <end position="615"/>
    </location>
</feature>
<feature type="turn" evidence="14">
    <location>
        <begin position="616"/>
        <end position="619"/>
    </location>
</feature>
<feature type="strand" evidence="14">
    <location>
        <begin position="620"/>
        <end position="626"/>
    </location>
</feature>
<feature type="helix" evidence="11">
    <location>
        <begin position="645"/>
        <end position="649"/>
    </location>
</feature>
<feature type="helix" evidence="12">
    <location>
        <begin position="652"/>
        <end position="656"/>
    </location>
</feature>
<feature type="strand" evidence="14">
    <location>
        <begin position="713"/>
        <end position="721"/>
    </location>
</feature>
<feature type="strand" evidence="13">
    <location>
        <begin position="723"/>
        <end position="727"/>
    </location>
</feature>
<feature type="strand" evidence="14">
    <location>
        <begin position="730"/>
        <end position="737"/>
    </location>
</feature>
<feature type="strand" evidence="14">
    <location>
        <begin position="740"/>
        <end position="748"/>
    </location>
</feature>
<feature type="helix" evidence="14">
    <location>
        <begin position="753"/>
        <end position="755"/>
    </location>
</feature>
<feature type="strand" evidence="14">
    <location>
        <begin position="761"/>
        <end position="769"/>
    </location>
</feature>
<feature type="strand" evidence="14">
    <location>
        <begin position="776"/>
        <end position="782"/>
    </location>
</feature>
<feature type="helix" evidence="14">
    <location>
        <begin position="794"/>
        <end position="797"/>
    </location>
</feature>
<feature type="helix" evidence="14">
    <location>
        <begin position="799"/>
        <end position="801"/>
    </location>
</feature>
<feature type="strand" evidence="14">
    <location>
        <begin position="810"/>
        <end position="823"/>
    </location>
</feature>
<feature type="turn" evidence="14">
    <location>
        <begin position="824"/>
        <end position="827"/>
    </location>
</feature>
<feature type="strand" evidence="14">
    <location>
        <begin position="828"/>
        <end position="834"/>
    </location>
</feature>
<feature type="helix" evidence="14">
    <location>
        <begin position="835"/>
        <end position="839"/>
    </location>
</feature>
<feature type="strand" evidence="14">
    <location>
        <begin position="843"/>
        <end position="852"/>
    </location>
</feature>
<feature type="strand" evidence="14">
    <location>
        <begin position="854"/>
        <end position="856"/>
    </location>
</feature>
<feature type="strand" evidence="14">
    <location>
        <begin position="860"/>
        <end position="868"/>
    </location>
</feature>
<feature type="strand" evidence="14">
    <location>
        <begin position="873"/>
        <end position="877"/>
    </location>
</feature>
<feature type="turn" evidence="14">
    <location>
        <begin position="878"/>
        <end position="880"/>
    </location>
</feature>
<feature type="strand" evidence="14">
    <location>
        <begin position="883"/>
        <end position="887"/>
    </location>
</feature>
<feature type="helix" evidence="14">
    <location>
        <begin position="895"/>
        <end position="900"/>
    </location>
</feature>
<feature type="strand" evidence="14">
    <location>
        <begin position="907"/>
        <end position="914"/>
    </location>
</feature>
<feature type="strand" evidence="14">
    <location>
        <begin position="917"/>
        <end position="924"/>
    </location>
</feature>
<evidence type="ECO:0000256" key="1">
    <source>
        <dbReference type="SAM" id="MobiDB-lite"/>
    </source>
</evidence>
<evidence type="ECO:0000269" key="2">
    <source>
    </source>
</evidence>
<evidence type="ECO:0000269" key="3">
    <source>
    </source>
</evidence>
<evidence type="ECO:0000269" key="4">
    <source>
    </source>
</evidence>
<evidence type="ECO:0000269" key="5">
    <source>
    </source>
</evidence>
<evidence type="ECO:0000269" key="6">
    <source ref="1"/>
</evidence>
<evidence type="ECO:0000303" key="7">
    <source>
    </source>
</evidence>
<evidence type="ECO:0000305" key="8"/>
<evidence type="ECO:0007744" key="9">
    <source>
    </source>
</evidence>
<evidence type="ECO:0007744" key="10">
    <source>
    </source>
</evidence>
<evidence type="ECO:0007829" key="11">
    <source>
        <dbReference type="PDB" id="3WP0"/>
    </source>
</evidence>
<evidence type="ECO:0007829" key="12">
    <source>
        <dbReference type="PDB" id="3WP1"/>
    </source>
</evidence>
<evidence type="ECO:0007829" key="13">
    <source>
        <dbReference type="PDB" id="6N8P"/>
    </source>
</evidence>
<evidence type="ECO:0007829" key="14">
    <source>
        <dbReference type="PDB" id="6N8R"/>
    </source>
</evidence>
<gene>
    <name type="primary">LLGL2</name>
</gene>
<reference key="1">
    <citation type="submission" date="1995-05" db="EMBL/GenBank/DDBJ databases">
        <title>A human homolog of the Drosophila 1(2) giant larvae tumor suppressor maps to 17q24-25.</title>
        <authorList>
            <person name="Wiemann S."/>
            <person name="Tommerup N."/>
            <person name="Celis J.E."/>
            <person name="Ansorge W."/>
            <person name="Leffers H."/>
        </authorList>
    </citation>
    <scope>NUCLEOTIDE SEQUENCE [MRNA] (ISOFORM C)</scope>
    <scope>VARIANT HIS-45</scope>
</reference>
<reference key="2">
    <citation type="journal article" date="2006" name="Nature">
        <title>DNA sequence of human chromosome 17 and analysis of rearrangement in the human lineage.</title>
        <authorList>
            <person name="Zody M.C."/>
            <person name="Garber M."/>
            <person name="Adams D.J."/>
            <person name="Sharpe T."/>
            <person name="Harrow J."/>
            <person name="Lupski J.R."/>
            <person name="Nicholson C."/>
            <person name="Searle S.M."/>
            <person name="Wilming L."/>
            <person name="Young S.K."/>
            <person name="Abouelleil A."/>
            <person name="Allen N.R."/>
            <person name="Bi W."/>
            <person name="Bloom T."/>
            <person name="Borowsky M.L."/>
            <person name="Bugalter B.E."/>
            <person name="Butler J."/>
            <person name="Chang J.L."/>
            <person name="Chen C.-K."/>
            <person name="Cook A."/>
            <person name="Corum B."/>
            <person name="Cuomo C.A."/>
            <person name="de Jong P.J."/>
            <person name="DeCaprio D."/>
            <person name="Dewar K."/>
            <person name="FitzGerald M."/>
            <person name="Gilbert J."/>
            <person name="Gibson R."/>
            <person name="Gnerre S."/>
            <person name="Goldstein S."/>
            <person name="Grafham D.V."/>
            <person name="Grocock R."/>
            <person name="Hafez N."/>
            <person name="Hagopian D.S."/>
            <person name="Hart E."/>
            <person name="Norman C.H."/>
            <person name="Humphray S."/>
            <person name="Jaffe D.B."/>
            <person name="Jones M."/>
            <person name="Kamal M."/>
            <person name="Khodiyar V.K."/>
            <person name="LaButti K."/>
            <person name="Laird G."/>
            <person name="Lehoczky J."/>
            <person name="Liu X."/>
            <person name="Lokyitsang T."/>
            <person name="Loveland J."/>
            <person name="Lui A."/>
            <person name="Macdonald P."/>
            <person name="Major J.E."/>
            <person name="Matthews L."/>
            <person name="Mauceli E."/>
            <person name="McCarroll S.A."/>
            <person name="Mihalev A.H."/>
            <person name="Mudge J."/>
            <person name="Nguyen C."/>
            <person name="Nicol R."/>
            <person name="O'Leary S.B."/>
            <person name="Osoegawa K."/>
            <person name="Schwartz D.C."/>
            <person name="Shaw-Smith C."/>
            <person name="Stankiewicz P."/>
            <person name="Steward C."/>
            <person name="Swarbreck D."/>
            <person name="Venkataraman V."/>
            <person name="Whittaker C.A."/>
            <person name="Yang X."/>
            <person name="Zimmer A.R."/>
            <person name="Bradley A."/>
            <person name="Hubbard T."/>
            <person name="Birren B.W."/>
            <person name="Rogers J."/>
            <person name="Lander E.S."/>
            <person name="Nusbaum C."/>
        </authorList>
    </citation>
    <scope>NUCLEOTIDE SEQUENCE [LARGE SCALE GENOMIC DNA]</scope>
</reference>
<reference key="3">
    <citation type="journal article" date="2004" name="Genome Res.">
        <title>The status, quality, and expansion of the NIH full-length cDNA project: the Mammalian Gene Collection (MGC).</title>
        <authorList>
            <consortium name="The MGC Project Team"/>
        </authorList>
    </citation>
    <scope>NUCLEOTIDE SEQUENCE [LARGE SCALE MRNA] (ISOFORMS A AND B)</scope>
    <scope>VARIANTS LEU-479 AND SER-759</scope>
    <source>
        <tissue>Lung</tissue>
        <tissue>Testis</tissue>
    </source>
</reference>
<reference key="4">
    <citation type="journal article" date="2005" name="J. Biol. Chem.">
        <title>Direct binding of Lgl2 to LGN during mitosis and its requirement for normal cell division.</title>
        <authorList>
            <person name="Yasumi M."/>
            <person name="Sakisaka T."/>
            <person name="Hoshino T."/>
            <person name="Kimura T."/>
            <person name="Sakamoto Y."/>
            <person name="Yamanaka T."/>
            <person name="Ohno S."/>
            <person name="Takai Y."/>
        </authorList>
    </citation>
    <scope>INTERACTION WITH GPSM2/LGN</scope>
    <scope>SUBCELLULAR LOCATION</scope>
    <scope>FUNCTION</scope>
    <source>
        <tissue>Brain</tissue>
    </source>
</reference>
<reference key="5">
    <citation type="journal article" date="2003" name="Curr. Biol.">
        <title>Mammalian Lgl forms a protein complex with PAR-6 and aPKC independently of PAR-3 to regulate epithelial cell polarity.</title>
        <authorList>
            <person name="Yamanaka T."/>
            <person name="Horikoshi Y."/>
            <person name="Sugiyama Y."/>
            <person name="Ishiyama C."/>
            <person name="Suzuki A."/>
            <person name="Hirose T."/>
            <person name="Iwamatsu A."/>
            <person name="Shinohara A."/>
            <person name="Ohno S."/>
        </authorList>
    </citation>
    <scope>INTERACTION WITH PARD6B/PAR-6 AND PRKCI/APKC</scope>
    <scope>PHOSPHORYLATION AT SER-653</scope>
    <scope>MUTAGENESIS OF SER-641; SER-645; SER-649; SER-653; SER-660 AND SER-663</scope>
</reference>
<reference key="6">
    <citation type="journal article" date="2008" name="Proc. Natl. Acad. Sci. U.S.A.">
        <title>A quantitative atlas of mitotic phosphorylation.</title>
        <authorList>
            <person name="Dephoure N."/>
            <person name="Zhou C."/>
            <person name="Villen J."/>
            <person name="Beausoleil S.A."/>
            <person name="Bakalarski C.E."/>
            <person name="Elledge S.J."/>
            <person name="Gygi S.P."/>
        </authorList>
    </citation>
    <scope>PHOSPHORYLATION [LARGE SCALE ANALYSIS] AT SER-1015</scope>
    <scope>IDENTIFICATION BY MASS SPECTROMETRY [LARGE SCALE ANALYSIS]</scope>
    <source>
        <tissue>Cervix carcinoma</tissue>
    </source>
</reference>
<reference key="7">
    <citation type="journal article" date="2010" name="PLoS Biol.">
        <title>Involvement of Lgl and Mahjong/VprBP in cell competition.</title>
        <authorList>
            <person name="Tamori Y."/>
            <person name="Bialucha C.U."/>
            <person name="Tian A.G."/>
            <person name="Kajita M."/>
            <person name="Huang Y.C."/>
            <person name="Norman M."/>
            <person name="Harrison N."/>
            <person name="Poulton J."/>
            <person name="Ivanovitch K."/>
            <person name="Disch L."/>
            <person name="Liu T."/>
            <person name="Deng W.M."/>
            <person name="Fujita Y."/>
        </authorList>
    </citation>
    <scope>INTERACTION WITH DCAF1</scope>
</reference>
<reference key="8">
    <citation type="journal article" date="2011" name="Sci. Signal.">
        <title>System-wide temporal characterization of the proteome and phosphoproteome of human embryonic stem cell differentiation.</title>
        <authorList>
            <person name="Rigbolt K.T."/>
            <person name="Prokhorova T.A."/>
            <person name="Akimov V."/>
            <person name="Henningsen J."/>
            <person name="Johansen P.T."/>
            <person name="Kratchmarova I."/>
            <person name="Kassem M."/>
            <person name="Mann M."/>
            <person name="Olsen J.V."/>
            <person name="Blagoev B."/>
        </authorList>
    </citation>
    <scope>IDENTIFICATION BY MASS SPECTROMETRY [LARGE SCALE ANALYSIS]</scope>
</reference>
<reference key="9">
    <citation type="journal article" date="2013" name="J. Proteome Res.">
        <title>Toward a comprehensive characterization of a human cancer cell phosphoproteome.</title>
        <authorList>
            <person name="Zhou H."/>
            <person name="Di Palma S."/>
            <person name="Preisinger C."/>
            <person name="Peng M."/>
            <person name="Polat A.N."/>
            <person name="Heck A.J."/>
            <person name="Mohammed S."/>
        </authorList>
    </citation>
    <scope>PHOSPHORYLATION [LARGE SCALE ANALYSIS] AT SER-965</scope>
    <scope>IDENTIFICATION BY MASS SPECTROMETRY [LARGE SCALE ANALYSIS]</scope>
    <source>
        <tissue>Cervix carcinoma</tissue>
        <tissue>Erythroleukemia</tissue>
    </source>
</reference>
<reference key="10">
    <citation type="journal article" date="2014" name="J. Proteomics">
        <title>An enzyme assisted RP-RPLC approach for in-depth analysis of human liver phosphoproteome.</title>
        <authorList>
            <person name="Bian Y."/>
            <person name="Song C."/>
            <person name="Cheng K."/>
            <person name="Dong M."/>
            <person name="Wang F."/>
            <person name="Huang J."/>
            <person name="Sun D."/>
            <person name="Wang L."/>
            <person name="Ye M."/>
            <person name="Zou H."/>
        </authorList>
    </citation>
    <scope>IDENTIFICATION BY MASS SPECTROMETRY [LARGE SCALE ANALYSIS]</scope>
    <source>
        <tissue>Liver</tissue>
    </source>
</reference>